<name>RL24_STAHJ</name>
<gene>
    <name evidence="1" type="primary">rplX</name>
    <name type="ordered locus">SH0813</name>
</gene>
<sequence length="105" mass="11562">MHIKKGDNVKVIAGKDKGKEGKVIATEPKKDRVVVEGVNVIKKHQKPTQLNPEGGILETEAAIHVSNVQLLDPKTNEPTRVGYKFVDGKKVRIVKKSGEEIKTNN</sequence>
<reference key="1">
    <citation type="journal article" date="2005" name="J. Bacteriol.">
        <title>Whole-genome sequencing of Staphylococcus haemolyticus uncovers the extreme plasticity of its genome and the evolution of human-colonizing staphylococcal species.</title>
        <authorList>
            <person name="Takeuchi F."/>
            <person name="Watanabe S."/>
            <person name="Baba T."/>
            <person name="Yuzawa H."/>
            <person name="Ito T."/>
            <person name="Morimoto Y."/>
            <person name="Kuroda M."/>
            <person name="Cui L."/>
            <person name="Takahashi M."/>
            <person name="Ankai A."/>
            <person name="Baba S."/>
            <person name="Fukui S."/>
            <person name="Lee J.C."/>
            <person name="Hiramatsu K."/>
        </authorList>
    </citation>
    <scope>NUCLEOTIDE SEQUENCE [LARGE SCALE GENOMIC DNA]</scope>
    <source>
        <strain>JCSC1435</strain>
    </source>
</reference>
<keyword id="KW-0687">Ribonucleoprotein</keyword>
<keyword id="KW-0689">Ribosomal protein</keyword>
<keyword id="KW-0694">RNA-binding</keyword>
<keyword id="KW-0699">rRNA-binding</keyword>
<organism>
    <name type="scientific">Staphylococcus haemolyticus (strain JCSC1435)</name>
    <dbReference type="NCBI Taxonomy" id="279808"/>
    <lineage>
        <taxon>Bacteria</taxon>
        <taxon>Bacillati</taxon>
        <taxon>Bacillota</taxon>
        <taxon>Bacilli</taxon>
        <taxon>Bacillales</taxon>
        <taxon>Staphylococcaceae</taxon>
        <taxon>Staphylococcus</taxon>
    </lineage>
</organism>
<evidence type="ECO:0000255" key="1">
    <source>
        <dbReference type="HAMAP-Rule" id="MF_01326"/>
    </source>
</evidence>
<evidence type="ECO:0000305" key="2"/>
<comment type="function">
    <text evidence="1">One of two assembly initiator proteins, it binds directly to the 5'-end of the 23S rRNA, where it nucleates assembly of the 50S subunit.</text>
</comment>
<comment type="function">
    <text evidence="1">One of the proteins that surrounds the polypeptide exit tunnel on the outside of the subunit.</text>
</comment>
<comment type="subunit">
    <text evidence="1">Part of the 50S ribosomal subunit.</text>
</comment>
<comment type="similarity">
    <text evidence="1">Belongs to the universal ribosomal protein uL24 family.</text>
</comment>
<feature type="chain" id="PRO_0000130722" description="Large ribosomal subunit protein uL24">
    <location>
        <begin position="1"/>
        <end position="105"/>
    </location>
</feature>
<accession>Q4L8A3</accession>
<proteinExistence type="inferred from homology"/>
<protein>
    <recommendedName>
        <fullName evidence="1">Large ribosomal subunit protein uL24</fullName>
    </recommendedName>
    <alternativeName>
        <fullName evidence="2">50S ribosomal protein L24</fullName>
    </alternativeName>
</protein>
<dbReference type="EMBL" id="AP006716">
    <property type="protein sequence ID" value="BAE04122.1"/>
    <property type="molecule type" value="Genomic_DNA"/>
</dbReference>
<dbReference type="RefSeq" id="WP_011275132.1">
    <property type="nucleotide sequence ID" value="NC_007168.1"/>
</dbReference>
<dbReference type="SMR" id="Q4L8A3"/>
<dbReference type="KEGG" id="sha:SH0813"/>
<dbReference type="eggNOG" id="COG0198">
    <property type="taxonomic scope" value="Bacteria"/>
</dbReference>
<dbReference type="HOGENOM" id="CLU_093315_2_0_9"/>
<dbReference type="OrthoDB" id="9807419at2"/>
<dbReference type="Proteomes" id="UP000000543">
    <property type="component" value="Chromosome"/>
</dbReference>
<dbReference type="GO" id="GO:1990904">
    <property type="term" value="C:ribonucleoprotein complex"/>
    <property type="evidence" value="ECO:0007669"/>
    <property type="project" value="UniProtKB-KW"/>
</dbReference>
<dbReference type="GO" id="GO:0005840">
    <property type="term" value="C:ribosome"/>
    <property type="evidence" value="ECO:0007669"/>
    <property type="project" value="UniProtKB-KW"/>
</dbReference>
<dbReference type="GO" id="GO:0019843">
    <property type="term" value="F:rRNA binding"/>
    <property type="evidence" value="ECO:0007669"/>
    <property type="project" value="UniProtKB-UniRule"/>
</dbReference>
<dbReference type="GO" id="GO:0003735">
    <property type="term" value="F:structural constituent of ribosome"/>
    <property type="evidence" value="ECO:0007669"/>
    <property type="project" value="InterPro"/>
</dbReference>
<dbReference type="GO" id="GO:0006412">
    <property type="term" value="P:translation"/>
    <property type="evidence" value="ECO:0007669"/>
    <property type="project" value="UniProtKB-UniRule"/>
</dbReference>
<dbReference type="CDD" id="cd06089">
    <property type="entry name" value="KOW_RPL26"/>
    <property type="match status" value="1"/>
</dbReference>
<dbReference type="FunFam" id="2.30.30.30:FF:000004">
    <property type="entry name" value="50S ribosomal protein L24"/>
    <property type="match status" value="1"/>
</dbReference>
<dbReference type="Gene3D" id="2.30.30.30">
    <property type="match status" value="1"/>
</dbReference>
<dbReference type="HAMAP" id="MF_01326_B">
    <property type="entry name" value="Ribosomal_uL24_B"/>
    <property type="match status" value="1"/>
</dbReference>
<dbReference type="InterPro" id="IPR005824">
    <property type="entry name" value="KOW"/>
</dbReference>
<dbReference type="InterPro" id="IPR014722">
    <property type="entry name" value="Rib_uL2_dom2"/>
</dbReference>
<dbReference type="InterPro" id="IPR003256">
    <property type="entry name" value="Ribosomal_uL24"/>
</dbReference>
<dbReference type="InterPro" id="IPR005825">
    <property type="entry name" value="Ribosomal_uL24_CS"/>
</dbReference>
<dbReference type="InterPro" id="IPR041988">
    <property type="entry name" value="Ribosomal_uL24_KOW"/>
</dbReference>
<dbReference type="InterPro" id="IPR008991">
    <property type="entry name" value="Translation_prot_SH3-like_sf"/>
</dbReference>
<dbReference type="NCBIfam" id="TIGR01079">
    <property type="entry name" value="rplX_bact"/>
    <property type="match status" value="1"/>
</dbReference>
<dbReference type="PANTHER" id="PTHR12903">
    <property type="entry name" value="MITOCHONDRIAL RIBOSOMAL PROTEIN L24"/>
    <property type="match status" value="1"/>
</dbReference>
<dbReference type="Pfam" id="PF00467">
    <property type="entry name" value="KOW"/>
    <property type="match status" value="1"/>
</dbReference>
<dbReference type="Pfam" id="PF17136">
    <property type="entry name" value="ribosomal_L24"/>
    <property type="match status" value="1"/>
</dbReference>
<dbReference type="SMART" id="SM00739">
    <property type="entry name" value="KOW"/>
    <property type="match status" value="1"/>
</dbReference>
<dbReference type="SUPFAM" id="SSF50104">
    <property type="entry name" value="Translation proteins SH3-like domain"/>
    <property type="match status" value="1"/>
</dbReference>
<dbReference type="PROSITE" id="PS01108">
    <property type="entry name" value="RIBOSOMAL_L24"/>
    <property type="match status" value="1"/>
</dbReference>